<name>GET3_TALMQ</name>
<accession>B6Q334</accession>
<organism>
    <name type="scientific">Talaromyces marneffei (strain ATCC 18224 / CBS 334.59 / QM 7333)</name>
    <name type="common">Penicillium marneffei</name>
    <dbReference type="NCBI Taxonomy" id="441960"/>
    <lineage>
        <taxon>Eukaryota</taxon>
        <taxon>Fungi</taxon>
        <taxon>Dikarya</taxon>
        <taxon>Ascomycota</taxon>
        <taxon>Pezizomycotina</taxon>
        <taxon>Eurotiomycetes</taxon>
        <taxon>Eurotiomycetidae</taxon>
        <taxon>Eurotiales</taxon>
        <taxon>Trichocomaceae</taxon>
        <taxon>Talaromyces</taxon>
        <taxon>Talaromyces sect. Talaromyces</taxon>
    </lineage>
</organism>
<feature type="chain" id="PRO_0000388221" description="ATPase get3">
    <location>
        <begin position="1"/>
        <end position="340"/>
    </location>
</feature>
<feature type="active site" evidence="1">
    <location>
        <position position="63"/>
    </location>
</feature>
<feature type="binding site" evidence="1">
    <location>
        <begin position="34"/>
        <end position="41"/>
    </location>
    <ligand>
        <name>ATP</name>
        <dbReference type="ChEBI" id="CHEBI:30616"/>
    </ligand>
</feature>
<feature type="binding site" evidence="1">
    <location>
        <position position="245"/>
    </location>
    <ligand>
        <name>ATP</name>
        <dbReference type="ChEBI" id="CHEBI:30616"/>
    </ligand>
</feature>
<feature type="binding site" evidence="1">
    <location>
        <position position="272"/>
    </location>
    <ligand>
        <name>ATP</name>
        <dbReference type="ChEBI" id="CHEBI:30616"/>
    </ligand>
</feature>
<feature type="binding site" evidence="1">
    <location>
        <position position="283"/>
    </location>
    <ligand>
        <name>Zn(2+)</name>
        <dbReference type="ChEBI" id="CHEBI:29105"/>
        <note>ligand shared between dimeric partners</note>
    </ligand>
</feature>
<feature type="binding site" evidence="1">
    <location>
        <position position="286"/>
    </location>
    <ligand>
        <name>Zn(2+)</name>
        <dbReference type="ChEBI" id="CHEBI:29105"/>
        <note>ligand shared between dimeric partners</note>
    </ligand>
</feature>
<comment type="function">
    <text evidence="1">ATPase required for the post-translational delivery of tail-anchored (TA) proteins to the endoplasmic reticulum. Recognizes and selectively binds the transmembrane domain of TA proteins in the cytosol. This complex then targets to the endoplasmic reticulum by membrane-bound receptors, where the tail-anchored protein is released for insertion. This process is regulated by ATP binding and hydrolysis. ATP binding drives the homodimer towards the closed dimer state, facilitating recognition of newly synthesized TA membrane proteins. ATP hydrolysis is required for insertion. Subsequently, the homodimer reverts towards the open dimer state, lowering its affinity for the membrane-bound receptor, and returning it to the cytosol to initiate a new round of targeting.</text>
</comment>
<comment type="subunit">
    <text evidence="1">Homodimer.</text>
</comment>
<comment type="subcellular location">
    <subcellularLocation>
        <location evidence="1">Cytoplasm</location>
    </subcellularLocation>
    <subcellularLocation>
        <location evidence="1">Endoplasmic reticulum</location>
    </subcellularLocation>
</comment>
<comment type="similarity">
    <text evidence="1">Belongs to the arsA ATPase family.</text>
</comment>
<protein>
    <recommendedName>
        <fullName evidence="1">ATPase get3</fullName>
        <ecNumber evidence="1">3.6.-.-</ecNumber>
    </recommendedName>
    <alternativeName>
        <fullName evidence="1">Arsenical pump-driving ATPase</fullName>
    </alternativeName>
    <alternativeName>
        <fullName evidence="1">Arsenite-stimulated ATPase</fullName>
    </alternativeName>
    <alternativeName>
        <fullName evidence="1">Golgi to ER traffic protein 3</fullName>
    </alternativeName>
    <alternativeName>
        <fullName evidence="1">Guided entry of tail-anchored proteins 3</fullName>
    </alternativeName>
</protein>
<gene>
    <name type="primary">get3</name>
    <name type="ORF">PMAA_019210</name>
</gene>
<reference key="1">
    <citation type="journal article" date="2015" name="Genome Announc.">
        <title>Genome sequence of the AIDS-associated pathogen Penicillium marneffei (ATCC18224) and its near taxonomic relative Talaromyces stipitatus (ATCC10500).</title>
        <authorList>
            <person name="Nierman W.C."/>
            <person name="Fedorova-Abrams N.D."/>
            <person name="Andrianopoulos A."/>
        </authorList>
    </citation>
    <scope>NUCLEOTIDE SEQUENCE [LARGE SCALE GENOMIC DNA]</scope>
    <source>
        <strain>ATCC 18224 / CBS 334.59 / QM 7333</strain>
    </source>
</reference>
<evidence type="ECO:0000255" key="1">
    <source>
        <dbReference type="HAMAP-Rule" id="MF_03112"/>
    </source>
</evidence>
<proteinExistence type="inferred from homology"/>
<dbReference type="EC" id="3.6.-.-" evidence="1"/>
<dbReference type="EMBL" id="DS995899">
    <property type="protein sequence ID" value="EEA27018.1"/>
    <property type="molecule type" value="Genomic_DNA"/>
</dbReference>
<dbReference type="RefSeq" id="XP_002143533.1">
    <property type="nucleotide sequence ID" value="XM_002143497.1"/>
</dbReference>
<dbReference type="SMR" id="B6Q334"/>
<dbReference type="STRING" id="441960.B6Q334"/>
<dbReference type="VEuPathDB" id="FungiDB:PMAA_019210"/>
<dbReference type="HOGENOM" id="CLU_040761_0_0_1"/>
<dbReference type="OrthoDB" id="2799at28568"/>
<dbReference type="PhylomeDB" id="B6Q334"/>
<dbReference type="Proteomes" id="UP000001294">
    <property type="component" value="Unassembled WGS sequence"/>
</dbReference>
<dbReference type="GO" id="GO:0043529">
    <property type="term" value="C:GET complex"/>
    <property type="evidence" value="ECO:0007669"/>
    <property type="project" value="TreeGrafter"/>
</dbReference>
<dbReference type="GO" id="GO:0005524">
    <property type="term" value="F:ATP binding"/>
    <property type="evidence" value="ECO:0007669"/>
    <property type="project" value="UniProtKB-UniRule"/>
</dbReference>
<dbReference type="GO" id="GO:0016887">
    <property type="term" value="F:ATP hydrolysis activity"/>
    <property type="evidence" value="ECO:0007669"/>
    <property type="project" value="InterPro"/>
</dbReference>
<dbReference type="GO" id="GO:0046872">
    <property type="term" value="F:metal ion binding"/>
    <property type="evidence" value="ECO:0007669"/>
    <property type="project" value="UniProtKB-KW"/>
</dbReference>
<dbReference type="GO" id="GO:0071816">
    <property type="term" value="P:tail-anchored membrane protein insertion into ER membrane"/>
    <property type="evidence" value="ECO:0007669"/>
    <property type="project" value="TreeGrafter"/>
</dbReference>
<dbReference type="CDD" id="cd02035">
    <property type="entry name" value="ArsA"/>
    <property type="match status" value="1"/>
</dbReference>
<dbReference type="FunFam" id="3.40.50.300:FF:000235">
    <property type="entry name" value="ATPase ASNA1"/>
    <property type="match status" value="1"/>
</dbReference>
<dbReference type="Gene3D" id="3.40.50.300">
    <property type="entry name" value="P-loop containing nucleotide triphosphate hydrolases"/>
    <property type="match status" value="1"/>
</dbReference>
<dbReference type="HAMAP" id="MF_03112">
    <property type="entry name" value="Asna1_Get3"/>
    <property type="match status" value="1"/>
</dbReference>
<dbReference type="InterPro" id="IPR025723">
    <property type="entry name" value="Anion-transp_ATPase-like_dom"/>
</dbReference>
<dbReference type="InterPro" id="IPR016300">
    <property type="entry name" value="ATPase_ArsA/GET3"/>
</dbReference>
<dbReference type="InterPro" id="IPR027542">
    <property type="entry name" value="ATPase_ArsA/GET3_euk"/>
</dbReference>
<dbReference type="InterPro" id="IPR027417">
    <property type="entry name" value="P-loop_NTPase"/>
</dbReference>
<dbReference type="NCBIfam" id="TIGR00345">
    <property type="entry name" value="GET3_arsA_TRC40"/>
    <property type="match status" value="1"/>
</dbReference>
<dbReference type="PANTHER" id="PTHR10803">
    <property type="entry name" value="ARSENICAL PUMP-DRIVING ATPASE ARSENITE-TRANSLOCATING ATPASE"/>
    <property type="match status" value="1"/>
</dbReference>
<dbReference type="PANTHER" id="PTHR10803:SF3">
    <property type="entry name" value="ATPASE GET3"/>
    <property type="match status" value="1"/>
</dbReference>
<dbReference type="Pfam" id="PF02374">
    <property type="entry name" value="ArsA_ATPase"/>
    <property type="match status" value="1"/>
</dbReference>
<dbReference type="SUPFAM" id="SSF52540">
    <property type="entry name" value="P-loop containing nucleoside triphosphate hydrolases"/>
    <property type="match status" value="1"/>
</dbReference>
<sequence>MSSTALIHDDEALEPTLQSILDQKTLRWIFVGGKGGVGKTTTSCSLAIQLSKVRKSVLLISTDPAHNLSDAFGQKFGKEARLVDGFTNLSAMEIDPNGSIQDLLASGGEAQEDPLAGLGMGGMMQDLAFSIPGVDEAMSFAEVLKQVKSLSYEVIVFDTAPTGHTLRFLQFPTVLEKALAKLSQLSSQFGPMLNSILGSRGGLPGGQNLDDLMSKMESLRETISEVNTQFKNPDMTTFVCVCIAEFLSLYETERMIQELTSYGIDTHAIVVNQLLFPKKDNPCEQCNARRKMQKKYLEQIEELYEDFNVVRMPLLVEEVRGKEKLEKFSEMLVKPYVPPE</sequence>
<keyword id="KW-0067">ATP-binding</keyword>
<keyword id="KW-0963">Cytoplasm</keyword>
<keyword id="KW-0256">Endoplasmic reticulum</keyword>
<keyword id="KW-0378">Hydrolase</keyword>
<keyword id="KW-0479">Metal-binding</keyword>
<keyword id="KW-0547">Nucleotide-binding</keyword>
<keyword id="KW-1185">Reference proteome</keyword>
<keyword id="KW-0813">Transport</keyword>
<keyword id="KW-0862">Zinc</keyword>